<gene>
    <name evidence="1" type="primary">recA</name>
</gene>
<proteinExistence type="inferred from homology"/>
<dbReference type="EMBL" id="L12684">
    <property type="protein sequence ID" value="AAC36872.1"/>
    <property type="molecule type" value="Genomic_DNA"/>
</dbReference>
<dbReference type="EMBL" id="U70864">
    <property type="protein sequence ID" value="AAB16921.1"/>
    <property type="molecule type" value="Genomic_DNA"/>
</dbReference>
<dbReference type="PIR" id="T10482">
    <property type="entry name" value="T10482"/>
</dbReference>
<dbReference type="RefSeq" id="WP_016715435.1">
    <property type="nucleotide sequence ID" value="NZ_AP022324.1"/>
</dbReference>
<dbReference type="SMR" id="Q07447"/>
<dbReference type="GeneID" id="49867308"/>
<dbReference type="eggNOG" id="COG0468">
    <property type="taxonomic scope" value="Bacteria"/>
</dbReference>
<dbReference type="OrthoDB" id="9776733at2"/>
<dbReference type="GO" id="GO:0005829">
    <property type="term" value="C:cytosol"/>
    <property type="evidence" value="ECO:0007669"/>
    <property type="project" value="TreeGrafter"/>
</dbReference>
<dbReference type="GO" id="GO:0005524">
    <property type="term" value="F:ATP binding"/>
    <property type="evidence" value="ECO:0007669"/>
    <property type="project" value="UniProtKB-UniRule"/>
</dbReference>
<dbReference type="GO" id="GO:0016887">
    <property type="term" value="F:ATP hydrolysis activity"/>
    <property type="evidence" value="ECO:0007669"/>
    <property type="project" value="InterPro"/>
</dbReference>
<dbReference type="GO" id="GO:0140664">
    <property type="term" value="F:ATP-dependent DNA damage sensor activity"/>
    <property type="evidence" value="ECO:0007669"/>
    <property type="project" value="InterPro"/>
</dbReference>
<dbReference type="GO" id="GO:0003684">
    <property type="term" value="F:damaged DNA binding"/>
    <property type="evidence" value="ECO:0007669"/>
    <property type="project" value="UniProtKB-UniRule"/>
</dbReference>
<dbReference type="GO" id="GO:0003697">
    <property type="term" value="F:single-stranded DNA binding"/>
    <property type="evidence" value="ECO:0007669"/>
    <property type="project" value="UniProtKB-UniRule"/>
</dbReference>
<dbReference type="GO" id="GO:0006310">
    <property type="term" value="P:DNA recombination"/>
    <property type="evidence" value="ECO:0007669"/>
    <property type="project" value="UniProtKB-UniRule"/>
</dbReference>
<dbReference type="GO" id="GO:0006281">
    <property type="term" value="P:DNA repair"/>
    <property type="evidence" value="ECO:0007669"/>
    <property type="project" value="UniProtKB-UniRule"/>
</dbReference>
<dbReference type="GO" id="GO:0009432">
    <property type="term" value="P:SOS response"/>
    <property type="evidence" value="ECO:0007669"/>
    <property type="project" value="UniProtKB-UniRule"/>
</dbReference>
<dbReference type="CDD" id="cd00983">
    <property type="entry name" value="RecA"/>
    <property type="match status" value="1"/>
</dbReference>
<dbReference type="FunFam" id="3.40.50.300:FF:000087">
    <property type="entry name" value="Recombinase RecA"/>
    <property type="match status" value="1"/>
</dbReference>
<dbReference type="Gene3D" id="3.40.50.300">
    <property type="entry name" value="P-loop containing nucleotide triphosphate hydrolases"/>
    <property type="match status" value="1"/>
</dbReference>
<dbReference type="HAMAP" id="MF_00268">
    <property type="entry name" value="RecA"/>
    <property type="match status" value="1"/>
</dbReference>
<dbReference type="InterPro" id="IPR003593">
    <property type="entry name" value="AAA+_ATPase"/>
</dbReference>
<dbReference type="InterPro" id="IPR013765">
    <property type="entry name" value="DNA_recomb/repair_RecA"/>
</dbReference>
<dbReference type="InterPro" id="IPR020584">
    <property type="entry name" value="DNA_recomb/repair_RecA_CS"/>
</dbReference>
<dbReference type="InterPro" id="IPR027417">
    <property type="entry name" value="P-loop_NTPase"/>
</dbReference>
<dbReference type="InterPro" id="IPR049261">
    <property type="entry name" value="RecA-like_C"/>
</dbReference>
<dbReference type="InterPro" id="IPR049428">
    <property type="entry name" value="RecA-like_N"/>
</dbReference>
<dbReference type="InterPro" id="IPR020588">
    <property type="entry name" value="RecA_ATP-bd"/>
</dbReference>
<dbReference type="InterPro" id="IPR023400">
    <property type="entry name" value="RecA_C_sf"/>
</dbReference>
<dbReference type="InterPro" id="IPR020587">
    <property type="entry name" value="RecA_monomer-monomer_interface"/>
</dbReference>
<dbReference type="NCBIfam" id="TIGR02012">
    <property type="entry name" value="tigrfam_recA"/>
    <property type="match status" value="1"/>
</dbReference>
<dbReference type="PANTHER" id="PTHR45900:SF1">
    <property type="entry name" value="MITOCHONDRIAL DNA REPAIR PROTEIN RECA HOMOLOG-RELATED"/>
    <property type="match status" value="1"/>
</dbReference>
<dbReference type="PANTHER" id="PTHR45900">
    <property type="entry name" value="RECA"/>
    <property type="match status" value="1"/>
</dbReference>
<dbReference type="Pfam" id="PF00154">
    <property type="entry name" value="RecA"/>
    <property type="match status" value="1"/>
</dbReference>
<dbReference type="Pfam" id="PF21096">
    <property type="entry name" value="RecA_C"/>
    <property type="match status" value="1"/>
</dbReference>
<dbReference type="PRINTS" id="PR00142">
    <property type="entry name" value="RECA"/>
</dbReference>
<dbReference type="SMART" id="SM00382">
    <property type="entry name" value="AAA"/>
    <property type="match status" value="1"/>
</dbReference>
<dbReference type="SUPFAM" id="SSF52540">
    <property type="entry name" value="P-loop containing nucleoside triphosphate hydrolases"/>
    <property type="match status" value="1"/>
</dbReference>
<dbReference type="SUPFAM" id="SSF54752">
    <property type="entry name" value="RecA protein, C-terminal domain"/>
    <property type="match status" value="1"/>
</dbReference>
<dbReference type="PROSITE" id="PS00321">
    <property type="entry name" value="RECA_1"/>
    <property type="match status" value="1"/>
</dbReference>
<dbReference type="PROSITE" id="PS50162">
    <property type="entry name" value="RECA_2"/>
    <property type="match status" value="1"/>
</dbReference>
<dbReference type="PROSITE" id="PS50163">
    <property type="entry name" value="RECA_3"/>
    <property type="match status" value="1"/>
</dbReference>
<evidence type="ECO:0000255" key="1">
    <source>
        <dbReference type="HAMAP-Rule" id="MF_00268"/>
    </source>
</evidence>
<feature type="chain" id="PRO_0000122806" description="Protein RecA">
    <location>
        <begin position="1"/>
        <end position="355"/>
    </location>
</feature>
<feature type="binding site" evidence="1">
    <location>
        <begin position="65"/>
        <end position="72"/>
    </location>
    <ligand>
        <name>ATP</name>
        <dbReference type="ChEBI" id="CHEBI:30616"/>
    </ligand>
</feature>
<protein>
    <recommendedName>
        <fullName evidence="1">Protein RecA</fullName>
    </recommendedName>
    <alternativeName>
        <fullName evidence="1">Recombinase A</fullName>
    </alternativeName>
</protein>
<keyword id="KW-0067">ATP-binding</keyword>
<keyword id="KW-0963">Cytoplasm</keyword>
<keyword id="KW-0227">DNA damage</keyword>
<keyword id="KW-0233">DNA recombination</keyword>
<keyword id="KW-0234">DNA repair</keyword>
<keyword id="KW-0238">DNA-binding</keyword>
<keyword id="KW-0547">Nucleotide-binding</keyword>
<keyword id="KW-0742">SOS response</keyword>
<reference key="1">
    <citation type="journal article" date="1993" name="Gene">
        <title>Construction of chromosomal recA mutants of Pseudomonas putida PpG2.</title>
        <authorList>
            <person name="Luo J."/>
            <person name="Burns G."/>
            <person name="Sokatch J.R."/>
        </authorList>
    </citation>
    <scope>NUCLEOTIDE SEQUENCE [GENOMIC DNA]</scope>
    <source>
        <strain>G2</strain>
    </source>
</reference>
<reference key="2">
    <citation type="submission" date="1996-10" db="EMBL/GenBank/DDBJ databases">
        <title>Cloning, DNA sequencing, and characterization of the Pseudomonas putida PpS145 recA gene, recA-associated gene and recA region.</title>
        <authorList>
            <person name="Yan M."/>
            <person name="McBeth D.L."/>
        </authorList>
    </citation>
    <scope>NUCLEOTIDE SEQUENCE [GENOMIC DNA]</scope>
    <source>
        <strain>PPS145</strain>
    </source>
</reference>
<accession>Q07447</accession>
<name>RECA_PSEPU</name>
<sequence length="355" mass="37532">MDDNKKRALAAALGQIERQFGKGAVMRMGDHERQAIPAISTGSLGLDIALGIGGLPKGRIVEIYGPESSGKTTLTLSVIAEAQKNGATCAFVDAEHALDPEYAGKLGVNVDDLLVSQPDTGEQALEITDMLVRSNAVDVIIVDSVAALVPKAEIEGEMGDMHVGLQARLMSQALRKITGNIKNANCLVIFINQIRMKIGVMFGSPETTTGGNALKFYASVRLDIRRTGAVKEGDEVVGSETRVKIVKNKVSPPFRQAEFQILYGKGIYRNGEIIDLGVSQGLVEKSGAWYAYQGNKIGQGKANAAKYLAENPAIGAEIEKQIRDKLLTSGAVAAAGKAAAVEADADDMADADAGY</sequence>
<organism>
    <name type="scientific">Pseudomonas putida</name>
    <name type="common">Arthrobacter siderocapsulatus</name>
    <dbReference type="NCBI Taxonomy" id="303"/>
    <lineage>
        <taxon>Bacteria</taxon>
        <taxon>Pseudomonadati</taxon>
        <taxon>Pseudomonadota</taxon>
        <taxon>Gammaproteobacteria</taxon>
        <taxon>Pseudomonadales</taxon>
        <taxon>Pseudomonadaceae</taxon>
        <taxon>Pseudomonas</taxon>
    </lineage>
</organism>
<comment type="function">
    <text>Can catalyze the hydrolysis of ATP in the presence of single-stranded DNA, the ATP-dependent uptake of single-stranded DNA by duplex DNA, and the ATP-dependent hybridization of homologous single-stranded DNAs. It interacts with LexA causing its activation and leading to its autocatalytic cleavage.</text>
</comment>
<comment type="subcellular location">
    <subcellularLocation>
        <location evidence="1">Cytoplasm</location>
    </subcellularLocation>
</comment>
<comment type="similarity">
    <text evidence="1">Belongs to the RecA family.</text>
</comment>